<feature type="chain" id="PRO_1000129339" description="Ribonuclease PH">
    <location>
        <begin position="1"/>
        <end position="238"/>
    </location>
</feature>
<feature type="binding site" evidence="1">
    <location>
        <position position="86"/>
    </location>
    <ligand>
        <name>phosphate</name>
        <dbReference type="ChEBI" id="CHEBI:43474"/>
        <note>substrate</note>
    </ligand>
</feature>
<feature type="binding site" evidence="1">
    <location>
        <begin position="124"/>
        <end position="126"/>
    </location>
    <ligand>
        <name>phosphate</name>
        <dbReference type="ChEBI" id="CHEBI:43474"/>
        <note>substrate</note>
    </ligand>
</feature>
<comment type="function">
    <text evidence="1">Phosphorolytic 3'-5' exoribonuclease that plays an important role in tRNA 3'-end maturation. Removes nucleotide residues following the 3'-CCA terminus of tRNAs; can also add nucleotides to the ends of RNA molecules by using nucleoside diphosphates as substrates, but this may not be physiologically important. Probably plays a role in initiation of 16S rRNA degradation (leading to ribosome degradation) during starvation.</text>
</comment>
<comment type="catalytic activity">
    <reaction evidence="1">
        <text>tRNA(n+1) + phosphate = tRNA(n) + a ribonucleoside 5'-diphosphate</text>
        <dbReference type="Rhea" id="RHEA:10628"/>
        <dbReference type="Rhea" id="RHEA-COMP:17343"/>
        <dbReference type="Rhea" id="RHEA-COMP:17344"/>
        <dbReference type="ChEBI" id="CHEBI:43474"/>
        <dbReference type="ChEBI" id="CHEBI:57930"/>
        <dbReference type="ChEBI" id="CHEBI:173114"/>
        <dbReference type="EC" id="2.7.7.56"/>
    </reaction>
</comment>
<comment type="subunit">
    <text evidence="1">Homohexameric ring arranged as a trimer of dimers.</text>
</comment>
<comment type="similarity">
    <text evidence="1">Belongs to the RNase PH family.</text>
</comment>
<gene>
    <name evidence="1" type="primary">rph</name>
    <name type="ordered locus">ECH74115_5013</name>
</gene>
<protein>
    <recommendedName>
        <fullName evidence="1">Ribonuclease PH</fullName>
        <shortName evidence="1">RNase PH</shortName>
        <ecNumber evidence="1">2.7.7.56</ecNumber>
    </recommendedName>
    <alternativeName>
        <fullName evidence="1">tRNA nucleotidyltransferase</fullName>
    </alternativeName>
</protein>
<dbReference type="EC" id="2.7.7.56" evidence="1"/>
<dbReference type="EMBL" id="CP001164">
    <property type="protein sequence ID" value="ACI38139.1"/>
    <property type="molecule type" value="Genomic_DNA"/>
</dbReference>
<dbReference type="RefSeq" id="WP_001247093.1">
    <property type="nucleotide sequence ID" value="NC_011353.1"/>
</dbReference>
<dbReference type="SMR" id="B5YWE1"/>
<dbReference type="GeneID" id="93778358"/>
<dbReference type="KEGG" id="ecf:ECH74115_5013"/>
<dbReference type="HOGENOM" id="CLU_050858_0_0_6"/>
<dbReference type="GO" id="GO:0000175">
    <property type="term" value="F:3'-5'-RNA exonuclease activity"/>
    <property type="evidence" value="ECO:0007669"/>
    <property type="project" value="UniProtKB-UniRule"/>
</dbReference>
<dbReference type="GO" id="GO:0000049">
    <property type="term" value="F:tRNA binding"/>
    <property type="evidence" value="ECO:0007669"/>
    <property type="project" value="UniProtKB-UniRule"/>
</dbReference>
<dbReference type="GO" id="GO:0009022">
    <property type="term" value="F:tRNA nucleotidyltransferase activity"/>
    <property type="evidence" value="ECO:0007669"/>
    <property type="project" value="UniProtKB-UniRule"/>
</dbReference>
<dbReference type="GO" id="GO:0016075">
    <property type="term" value="P:rRNA catabolic process"/>
    <property type="evidence" value="ECO:0007669"/>
    <property type="project" value="UniProtKB-UniRule"/>
</dbReference>
<dbReference type="GO" id="GO:0006364">
    <property type="term" value="P:rRNA processing"/>
    <property type="evidence" value="ECO:0007669"/>
    <property type="project" value="UniProtKB-KW"/>
</dbReference>
<dbReference type="GO" id="GO:0008033">
    <property type="term" value="P:tRNA processing"/>
    <property type="evidence" value="ECO:0007669"/>
    <property type="project" value="UniProtKB-UniRule"/>
</dbReference>
<dbReference type="CDD" id="cd11362">
    <property type="entry name" value="RNase_PH_bact"/>
    <property type="match status" value="1"/>
</dbReference>
<dbReference type="FunFam" id="3.30.230.70:FF:000003">
    <property type="entry name" value="Ribonuclease PH"/>
    <property type="match status" value="1"/>
</dbReference>
<dbReference type="Gene3D" id="3.30.230.70">
    <property type="entry name" value="GHMP Kinase, N-terminal domain"/>
    <property type="match status" value="1"/>
</dbReference>
<dbReference type="HAMAP" id="MF_00564">
    <property type="entry name" value="RNase_PH"/>
    <property type="match status" value="1"/>
</dbReference>
<dbReference type="InterPro" id="IPR001247">
    <property type="entry name" value="ExoRNase_PH_dom1"/>
</dbReference>
<dbReference type="InterPro" id="IPR015847">
    <property type="entry name" value="ExoRNase_PH_dom2"/>
</dbReference>
<dbReference type="InterPro" id="IPR036345">
    <property type="entry name" value="ExoRNase_PH_dom2_sf"/>
</dbReference>
<dbReference type="InterPro" id="IPR027408">
    <property type="entry name" value="PNPase/RNase_PH_dom_sf"/>
</dbReference>
<dbReference type="InterPro" id="IPR020568">
    <property type="entry name" value="Ribosomal_Su5_D2-typ_SF"/>
</dbReference>
<dbReference type="InterPro" id="IPR050080">
    <property type="entry name" value="RNase_PH"/>
</dbReference>
<dbReference type="InterPro" id="IPR002381">
    <property type="entry name" value="RNase_PH_bac-type"/>
</dbReference>
<dbReference type="InterPro" id="IPR018336">
    <property type="entry name" value="RNase_PH_CS"/>
</dbReference>
<dbReference type="NCBIfam" id="TIGR01966">
    <property type="entry name" value="RNasePH"/>
    <property type="match status" value="1"/>
</dbReference>
<dbReference type="PANTHER" id="PTHR11953">
    <property type="entry name" value="EXOSOME COMPLEX COMPONENT"/>
    <property type="match status" value="1"/>
</dbReference>
<dbReference type="PANTHER" id="PTHR11953:SF0">
    <property type="entry name" value="EXOSOME COMPLEX COMPONENT RRP41"/>
    <property type="match status" value="1"/>
</dbReference>
<dbReference type="Pfam" id="PF01138">
    <property type="entry name" value="RNase_PH"/>
    <property type="match status" value="1"/>
</dbReference>
<dbReference type="Pfam" id="PF03725">
    <property type="entry name" value="RNase_PH_C"/>
    <property type="match status" value="1"/>
</dbReference>
<dbReference type="SUPFAM" id="SSF55666">
    <property type="entry name" value="Ribonuclease PH domain 2-like"/>
    <property type="match status" value="1"/>
</dbReference>
<dbReference type="SUPFAM" id="SSF54211">
    <property type="entry name" value="Ribosomal protein S5 domain 2-like"/>
    <property type="match status" value="1"/>
</dbReference>
<dbReference type="PROSITE" id="PS01277">
    <property type="entry name" value="RIBONUCLEASE_PH"/>
    <property type="match status" value="1"/>
</dbReference>
<keyword id="KW-0548">Nucleotidyltransferase</keyword>
<keyword id="KW-0694">RNA-binding</keyword>
<keyword id="KW-0698">rRNA processing</keyword>
<keyword id="KW-0808">Transferase</keyword>
<keyword id="KW-0819">tRNA processing</keyword>
<keyword id="KW-0820">tRNA-binding</keyword>
<sequence>MRPAGRSNNQVRPVTLTRNYTKHAEGSVLVEFGDTKVLCTASIEEGVPRFLKGQGQGWITAEYGMLPRSTHTRNAREAAKGKQGGRTMEIQRLIARALRAAVDLKALGEFTITLDCDVLQADGGTRTASITGACVALADALQKLVENGKLKTNPMKGMVAAVSVGIVNGEAVCDLEYVEDSAAETDMNVVMTEDGRIIEVQGTAEGEPFTHEELLTLLALARGGIESIVATQKAALAN</sequence>
<accession>B5YWE1</accession>
<name>RNPH_ECO5E</name>
<reference key="1">
    <citation type="journal article" date="2011" name="Proc. Natl. Acad. Sci. U.S.A.">
        <title>Genomic anatomy of Escherichia coli O157:H7 outbreaks.</title>
        <authorList>
            <person name="Eppinger M."/>
            <person name="Mammel M.K."/>
            <person name="Leclerc J.E."/>
            <person name="Ravel J."/>
            <person name="Cebula T.A."/>
        </authorList>
    </citation>
    <scope>NUCLEOTIDE SEQUENCE [LARGE SCALE GENOMIC DNA]</scope>
    <source>
        <strain>EC4115 / EHEC</strain>
    </source>
</reference>
<evidence type="ECO:0000255" key="1">
    <source>
        <dbReference type="HAMAP-Rule" id="MF_00564"/>
    </source>
</evidence>
<proteinExistence type="inferred from homology"/>
<organism>
    <name type="scientific">Escherichia coli O157:H7 (strain EC4115 / EHEC)</name>
    <dbReference type="NCBI Taxonomy" id="444450"/>
    <lineage>
        <taxon>Bacteria</taxon>
        <taxon>Pseudomonadati</taxon>
        <taxon>Pseudomonadota</taxon>
        <taxon>Gammaproteobacteria</taxon>
        <taxon>Enterobacterales</taxon>
        <taxon>Enterobacteriaceae</taxon>
        <taxon>Escherichia</taxon>
    </lineage>
</organism>